<proteinExistence type="evidence at protein level"/>
<accession>P60265</accession>
<evidence type="ECO:0000250" key="1"/>
<evidence type="ECO:0000255" key="2">
    <source>
        <dbReference type="PROSITE-ProRule" id="PRU01210"/>
    </source>
</evidence>
<evidence type="ECO:0000269" key="3">
    <source>
    </source>
</evidence>
<evidence type="ECO:0000305" key="4"/>
<keyword id="KW-0903">Direct protein sequencing</keyword>
<keyword id="KW-1015">Disulfide bond</keyword>
<keyword id="KW-0872">Ion channel impairing toxin</keyword>
<keyword id="KW-0528">Neurotoxin</keyword>
<keyword id="KW-0964">Secreted</keyword>
<keyword id="KW-0800">Toxin</keyword>
<keyword id="KW-0738">Voltage-gated sodium channel impairing toxin</keyword>
<feature type="chain" id="PRO_0000066770" description="Beta-toxin Cn9">
    <location>
        <begin position="1"/>
        <end position="14" status="greater than"/>
    </location>
</feature>
<feature type="domain" description="LCN-type CS-alpha/beta" evidence="2">
    <location>
        <begin position="2"/>
        <end position="14" status="greater than"/>
    </location>
</feature>
<feature type="non-terminal residue">
    <location>
        <position position="14"/>
    </location>
</feature>
<dbReference type="GO" id="GO:0005576">
    <property type="term" value="C:extracellular region"/>
    <property type="evidence" value="ECO:0007669"/>
    <property type="project" value="UniProtKB-SubCell"/>
</dbReference>
<dbReference type="GO" id="GO:0008200">
    <property type="term" value="F:ion channel inhibitor activity"/>
    <property type="evidence" value="ECO:0007669"/>
    <property type="project" value="InterPro"/>
</dbReference>
<dbReference type="GO" id="GO:0017080">
    <property type="term" value="F:sodium channel regulator activity"/>
    <property type="evidence" value="ECO:0007669"/>
    <property type="project" value="UniProtKB-KW"/>
</dbReference>
<dbReference type="GO" id="GO:0090729">
    <property type="term" value="F:toxin activity"/>
    <property type="evidence" value="ECO:0007669"/>
    <property type="project" value="UniProtKB-KW"/>
</dbReference>
<dbReference type="InterPro" id="IPR044062">
    <property type="entry name" value="LCN-type_CS_alpha_beta_dom"/>
</dbReference>
<dbReference type="PROSITE" id="PS51863">
    <property type="entry name" value="LCN_CSAB"/>
    <property type="match status" value="1"/>
</dbReference>
<sequence length="14" mass="1643">KKDGYPIQENGCKY</sequence>
<comment type="function">
    <text evidence="1">Beta toxins bind voltage-independently at site-4 of sodium channels (Nav) and shift the voltage of activation toward more negative potentials thereby affecting sodium channel activation and promoting spontaneous and repetitive firing.</text>
</comment>
<comment type="subcellular location">
    <subcellularLocation>
        <location evidence="3">Secreted</location>
    </subcellularLocation>
</comment>
<comment type="tissue specificity">
    <text evidence="4">Expressed by the venom gland.</text>
</comment>
<comment type="domain">
    <text evidence="4">Has the structural arrangement of an alpha-helix connected to antiparallel beta-sheets by disulfide bonds (CS-alpha/beta).</text>
</comment>
<comment type="PTM">
    <text evidence="1">Contains 4 disulfide bonds.</text>
</comment>
<comment type="similarity">
    <text evidence="4">Belongs to the long (4 C-C) scorpion toxin superfamily. Sodium channel inhibitor family. Beta subfamily.</text>
</comment>
<reference key="1">
    <citation type="journal article" date="1994" name="J. Biochem.">
        <title>Isolation and pharmacological characterization of four novel Na+ channel-blocking toxins from the scorpion Centruroides noxius Hoffmann.</title>
        <authorList>
            <person name="Valdivia H.H."/>
            <person name="Martin B.M."/>
            <person name="Ramirez A.N."/>
            <person name="Fletcher P.L. Jr."/>
            <person name="Possani L.D."/>
        </authorList>
    </citation>
    <scope>PROTEIN SEQUENCE</scope>
    <scope>SUBCELLULAR LOCATION</scope>
    <source>
        <tissue>Venom</tissue>
    </source>
</reference>
<name>SCX9_CENNO</name>
<protein>
    <recommendedName>
        <fullName>Beta-toxin Cn9</fullName>
        <shortName>Toxin-9</shortName>
    </recommendedName>
    <alternativeName>
        <fullName>Toxin II-14.4</fullName>
    </alternativeName>
</protein>
<organism>
    <name type="scientific">Centruroides noxius</name>
    <name type="common">Mexican scorpion</name>
    <dbReference type="NCBI Taxonomy" id="6878"/>
    <lineage>
        <taxon>Eukaryota</taxon>
        <taxon>Metazoa</taxon>
        <taxon>Ecdysozoa</taxon>
        <taxon>Arthropoda</taxon>
        <taxon>Chelicerata</taxon>
        <taxon>Arachnida</taxon>
        <taxon>Scorpiones</taxon>
        <taxon>Buthida</taxon>
        <taxon>Buthoidea</taxon>
        <taxon>Buthidae</taxon>
        <taxon>Centruroides</taxon>
    </lineage>
</organism>